<evidence type="ECO:0000255" key="1">
    <source>
        <dbReference type="HAMAP-Rule" id="MF_00821"/>
    </source>
</evidence>
<sequence>MAEVANNEQQAPQFNIQRVYTKDVSFETPNSPAVFQKEWNPEVKLDLDTRSAKLADDVYEVVLSLTVTAQNAGETAFLCEVQQAGIFSIAGLSEPQLAHSLGAYCPNILFPYAREAVGSLVGRGTFPQLNLAPVNFDALFAQYVQQRQAAAAAPAAEEANA</sequence>
<reference key="1">
    <citation type="submission" date="2006-08" db="EMBL/GenBank/DDBJ databases">
        <title>Complete sequence of chromosome 1 of Shewanella sp. MR-7.</title>
        <authorList>
            <person name="Copeland A."/>
            <person name="Lucas S."/>
            <person name="Lapidus A."/>
            <person name="Barry K."/>
            <person name="Detter J.C."/>
            <person name="Glavina del Rio T."/>
            <person name="Hammon N."/>
            <person name="Israni S."/>
            <person name="Dalin E."/>
            <person name="Tice H."/>
            <person name="Pitluck S."/>
            <person name="Kiss H."/>
            <person name="Brettin T."/>
            <person name="Bruce D."/>
            <person name="Han C."/>
            <person name="Tapia R."/>
            <person name="Gilna P."/>
            <person name="Schmutz J."/>
            <person name="Larimer F."/>
            <person name="Land M."/>
            <person name="Hauser L."/>
            <person name="Kyrpides N."/>
            <person name="Mikhailova N."/>
            <person name="Nealson K."/>
            <person name="Konstantinidis K."/>
            <person name="Klappenbach J."/>
            <person name="Tiedje J."/>
            <person name="Richardson P."/>
        </authorList>
    </citation>
    <scope>NUCLEOTIDE SEQUENCE [LARGE SCALE GENOMIC DNA]</scope>
    <source>
        <strain>MR-7</strain>
    </source>
</reference>
<protein>
    <recommendedName>
        <fullName evidence="1">Protein-export protein SecB</fullName>
    </recommendedName>
</protein>
<proteinExistence type="inferred from homology"/>
<gene>
    <name evidence="1" type="primary">secB</name>
    <name type="ordered locus">Shewmr7_0045</name>
</gene>
<name>SECB_SHESR</name>
<feature type="chain" id="PRO_1000062525" description="Protein-export protein SecB">
    <location>
        <begin position="1"/>
        <end position="161"/>
    </location>
</feature>
<comment type="function">
    <text evidence="1">One of the proteins required for the normal export of preproteins out of the cell cytoplasm. It is a molecular chaperone that binds to a subset of precursor proteins, maintaining them in a translocation-competent state. It also specifically binds to its receptor SecA.</text>
</comment>
<comment type="subunit">
    <text evidence="1">Homotetramer, a dimer of dimers. One homotetramer interacts with 1 SecA dimer.</text>
</comment>
<comment type="subcellular location">
    <subcellularLocation>
        <location evidence="1">Cytoplasm</location>
    </subcellularLocation>
</comment>
<comment type="similarity">
    <text evidence="1">Belongs to the SecB family.</text>
</comment>
<accession>Q0I0Q4</accession>
<organism>
    <name type="scientific">Shewanella sp. (strain MR-7)</name>
    <dbReference type="NCBI Taxonomy" id="60481"/>
    <lineage>
        <taxon>Bacteria</taxon>
        <taxon>Pseudomonadati</taxon>
        <taxon>Pseudomonadota</taxon>
        <taxon>Gammaproteobacteria</taxon>
        <taxon>Alteromonadales</taxon>
        <taxon>Shewanellaceae</taxon>
        <taxon>Shewanella</taxon>
    </lineage>
</organism>
<keyword id="KW-0143">Chaperone</keyword>
<keyword id="KW-0963">Cytoplasm</keyword>
<keyword id="KW-0653">Protein transport</keyword>
<keyword id="KW-0811">Translocation</keyword>
<keyword id="KW-0813">Transport</keyword>
<dbReference type="EMBL" id="CP000444">
    <property type="protein sequence ID" value="ABI41051.1"/>
    <property type="molecule type" value="Genomic_DNA"/>
</dbReference>
<dbReference type="SMR" id="Q0I0Q4"/>
<dbReference type="KEGG" id="shm:Shewmr7_0045"/>
<dbReference type="HOGENOM" id="CLU_111574_1_0_6"/>
<dbReference type="GO" id="GO:0005737">
    <property type="term" value="C:cytoplasm"/>
    <property type="evidence" value="ECO:0007669"/>
    <property type="project" value="UniProtKB-SubCell"/>
</dbReference>
<dbReference type="GO" id="GO:0051082">
    <property type="term" value="F:unfolded protein binding"/>
    <property type="evidence" value="ECO:0007669"/>
    <property type="project" value="InterPro"/>
</dbReference>
<dbReference type="GO" id="GO:0006457">
    <property type="term" value="P:protein folding"/>
    <property type="evidence" value="ECO:0007669"/>
    <property type="project" value="UniProtKB-UniRule"/>
</dbReference>
<dbReference type="GO" id="GO:0051262">
    <property type="term" value="P:protein tetramerization"/>
    <property type="evidence" value="ECO:0007669"/>
    <property type="project" value="InterPro"/>
</dbReference>
<dbReference type="GO" id="GO:0015031">
    <property type="term" value="P:protein transport"/>
    <property type="evidence" value="ECO:0007669"/>
    <property type="project" value="UniProtKB-UniRule"/>
</dbReference>
<dbReference type="Gene3D" id="3.10.420.10">
    <property type="entry name" value="SecB-like"/>
    <property type="match status" value="1"/>
</dbReference>
<dbReference type="HAMAP" id="MF_00821">
    <property type="entry name" value="SecB"/>
    <property type="match status" value="1"/>
</dbReference>
<dbReference type="InterPro" id="IPR003708">
    <property type="entry name" value="SecB"/>
</dbReference>
<dbReference type="InterPro" id="IPR035958">
    <property type="entry name" value="SecB-like_sf"/>
</dbReference>
<dbReference type="NCBIfam" id="NF004393">
    <property type="entry name" value="PRK05751.1-4"/>
    <property type="match status" value="1"/>
</dbReference>
<dbReference type="NCBIfam" id="TIGR00809">
    <property type="entry name" value="secB"/>
    <property type="match status" value="1"/>
</dbReference>
<dbReference type="PANTHER" id="PTHR36918">
    <property type="match status" value="1"/>
</dbReference>
<dbReference type="PANTHER" id="PTHR36918:SF1">
    <property type="entry name" value="PROTEIN-EXPORT PROTEIN SECB"/>
    <property type="match status" value="1"/>
</dbReference>
<dbReference type="Pfam" id="PF02556">
    <property type="entry name" value="SecB"/>
    <property type="match status" value="1"/>
</dbReference>
<dbReference type="PRINTS" id="PR01594">
    <property type="entry name" value="SECBCHAPRONE"/>
</dbReference>
<dbReference type="SUPFAM" id="SSF54611">
    <property type="entry name" value="SecB-like"/>
    <property type="match status" value="1"/>
</dbReference>